<reference key="1">
    <citation type="submission" date="2007-03" db="EMBL/GenBank/DDBJ databases">
        <title>Sequencing analysis of Nasturtium officinale chloroplast DNA.</title>
        <authorList>
            <person name="Hosouchi T."/>
            <person name="Tsuruoka H."/>
            <person name="Kotani H."/>
        </authorList>
    </citation>
    <scope>NUCLEOTIDE SEQUENCE [LARGE SCALE GENOMIC DNA]</scope>
</reference>
<comment type="function">
    <text evidence="1">Required during biogenesis of c-type cytochromes (cytochrome c6 and cytochrome f) at the step of heme attachment.</text>
</comment>
<comment type="subunit">
    <text evidence="1">May interact with Ccs1.</text>
</comment>
<comment type="subcellular location">
    <subcellularLocation>
        <location evidence="1">Plastid</location>
        <location evidence="1">Chloroplast thylakoid membrane</location>
        <topology evidence="1">Multi-pass membrane protein</topology>
    </subcellularLocation>
</comment>
<comment type="similarity">
    <text evidence="1">Belongs to the CcmF/CycK/Ccl1/NrfE/CcsA family.</text>
</comment>
<geneLocation type="chloroplast"/>
<organism>
    <name type="scientific">Nasturtium officinale</name>
    <name type="common">Watercress</name>
    <name type="synonym">Rorippa nasturtium-aquaticum</name>
    <dbReference type="NCBI Taxonomy" id="65948"/>
    <lineage>
        <taxon>Eukaryota</taxon>
        <taxon>Viridiplantae</taxon>
        <taxon>Streptophyta</taxon>
        <taxon>Embryophyta</taxon>
        <taxon>Tracheophyta</taxon>
        <taxon>Spermatophyta</taxon>
        <taxon>Magnoliopsida</taxon>
        <taxon>eudicotyledons</taxon>
        <taxon>Gunneridae</taxon>
        <taxon>Pentapetalae</taxon>
        <taxon>rosids</taxon>
        <taxon>malvids</taxon>
        <taxon>Brassicales</taxon>
        <taxon>Brassicaceae</taxon>
        <taxon>Cardamineae</taxon>
        <taxon>Nasturtium</taxon>
    </lineage>
</organism>
<protein>
    <recommendedName>
        <fullName evidence="1">Cytochrome c biogenesis protein CcsA</fullName>
    </recommendedName>
</protein>
<keyword id="KW-0150">Chloroplast</keyword>
<keyword id="KW-0201">Cytochrome c-type biogenesis</keyword>
<keyword id="KW-0472">Membrane</keyword>
<keyword id="KW-0934">Plastid</keyword>
<keyword id="KW-0793">Thylakoid</keyword>
<keyword id="KW-0812">Transmembrane</keyword>
<keyword id="KW-1133">Transmembrane helix</keyword>
<name>CCSA_NASOF</name>
<evidence type="ECO:0000255" key="1">
    <source>
        <dbReference type="HAMAP-Rule" id="MF_01391"/>
    </source>
</evidence>
<gene>
    <name evidence="1" type="primary">ccsA</name>
</gene>
<dbReference type="EMBL" id="AP009376">
    <property type="protein sequence ID" value="BAF50689.1"/>
    <property type="molecule type" value="Genomic_DNA"/>
</dbReference>
<dbReference type="RefSeq" id="YP_001123864.1">
    <property type="nucleotide sequence ID" value="NC_009275.1"/>
</dbReference>
<dbReference type="SMR" id="A4QLY4"/>
<dbReference type="GeneID" id="4962158"/>
<dbReference type="GO" id="GO:0009535">
    <property type="term" value="C:chloroplast thylakoid membrane"/>
    <property type="evidence" value="ECO:0007669"/>
    <property type="project" value="UniProtKB-SubCell"/>
</dbReference>
<dbReference type="GO" id="GO:0005886">
    <property type="term" value="C:plasma membrane"/>
    <property type="evidence" value="ECO:0007669"/>
    <property type="project" value="TreeGrafter"/>
</dbReference>
<dbReference type="GO" id="GO:0020037">
    <property type="term" value="F:heme binding"/>
    <property type="evidence" value="ECO:0007669"/>
    <property type="project" value="InterPro"/>
</dbReference>
<dbReference type="GO" id="GO:0017004">
    <property type="term" value="P:cytochrome complex assembly"/>
    <property type="evidence" value="ECO:0007669"/>
    <property type="project" value="UniProtKB-UniRule"/>
</dbReference>
<dbReference type="HAMAP" id="MF_01391">
    <property type="entry name" value="CytC_CcsA"/>
    <property type="match status" value="1"/>
</dbReference>
<dbReference type="InterPro" id="IPR002541">
    <property type="entry name" value="Cyt_c_assembly"/>
</dbReference>
<dbReference type="InterPro" id="IPR017562">
    <property type="entry name" value="Cyt_c_biogenesis_CcsA"/>
</dbReference>
<dbReference type="InterPro" id="IPR045062">
    <property type="entry name" value="Cyt_c_biogenesis_CcsA/CcmC"/>
</dbReference>
<dbReference type="NCBIfam" id="TIGR03144">
    <property type="entry name" value="cytochr_II_ccsB"/>
    <property type="match status" value="1"/>
</dbReference>
<dbReference type="PANTHER" id="PTHR30071:SF1">
    <property type="entry name" value="CYTOCHROME B_B6 PROTEIN-RELATED"/>
    <property type="match status" value="1"/>
</dbReference>
<dbReference type="PANTHER" id="PTHR30071">
    <property type="entry name" value="HEME EXPORTER PROTEIN C"/>
    <property type="match status" value="1"/>
</dbReference>
<dbReference type="Pfam" id="PF01578">
    <property type="entry name" value="Cytochrom_C_asm"/>
    <property type="match status" value="1"/>
</dbReference>
<accession>A4QLY4</accession>
<proteinExistence type="inferred from homology"/>
<feature type="chain" id="PRO_0000353771" description="Cytochrome c biogenesis protein CcsA">
    <location>
        <begin position="1"/>
        <end position="328"/>
    </location>
</feature>
<feature type="transmembrane region" description="Helical" evidence="1">
    <location>
        <begin position="13"/>
        <end position="33"/>
    </location>
</feature>
<feature type="transmembrane region" description="Helical" evidence="1">
    <location>
        <begin position="46"/>
        <end position="66"/>
    </location>
</feature>
<feature type="transmembrane region" description="Helical" evidence="1">
    <location>
        <begin position="73"/>
        <end position="93"/>
    </location>
</feature>
<feature type="transmembrane region" description="Helical" evidence="1">
    <location>
        <begin position="101"/>
        <end position="121"/>
    </location>
</feature>
<feature type="transmembrane region" description="Helical" evidence="1">
    <location>
        <begin position="146"/>
        <end position="166"/>
    </location>
</feature>
<feature type="transmembrane region" description="Helical" evidence="1">
    <location>
        <begin position="234"/>
        <end position="254"/>
    </location>
</feature>
<feature type="transmembrane region" description="Helical" evidence="1">
    <location>
        <begin position="263"/>
        <end position="283"/>
    </location>
</feature>
<feature type="transmembrane region" description="Helical" evidence="1">
    <location>
        <begin position="295"/>
        <end position="315"/>
    </location>
</feature>
<sequence length="328" mass="37598">MIFSILEHILTHISFSVISIVLTIYFLTLLVNLDEIIGFFDSSDKGIVITFFGITGLLFTRWIYSGHFPLSNLYESLIFLSWAFSIIHMVSYFNKKKKNHLNAITAPSAIFIQGFATSGLLNKMPQSAILVPALQSQWLMMHVSMMILGYGALLCGSLLSMALLVITFRKVGPTFLQKNIKKKFLLTELFSFDVFYSINEKNAILLQQNINFSFSRNYYRYQLIEQLDYWSFRIISLGFIFLTVGILSGAVWANETWGSYWNWDPKETWAFITWTIFAIYLHIKTNRNVRSINSAIVASIGFILIWICYFGVNLLGIGLHSYGSFTSN</sequence>